<keyword id="KW-0067">ATP-binding</keyword>
<keyword id="KW-0963">Cytoplasm</keyword>
<keyword id="KW-0275">Fatty acid biosynthesis</keyword>
<keyword id="KW-0276">Fatty acid metabolism</keyword>
<keyword id="KW-0444">Lipid biosynthesis</keyword>
<keyword id="KW-0443">Lipid metabolism</keyword>
<keyword id="KW-0479">Metal-binding</keyword>
<keyword id="KW-0547">Nucleotide-binding</keyword>
<keyword id="KW-1185">Reference proteome</keyword>
<keyword id="KW-0808">Transferase</keyword>
<keyword id="KW-0862">Zinc</keyword>
<keyword id="KW-0863">Zinc-finger</keyword>
<feature type="chain" id="PRO_0000389750" description="Acetyl-coenzyme A carboxylase carboxyl transferase subunit beta">
    <location>
        <begin position="1"/>
        <end position="289"/>
    </location>
</feature>
<feature type="domain" description="CoA carboxyltransferase N-terminal" evidence="2">
    <location>
        <begin position="24"/>
        <end position="289"/>
    </location>
</feature>
<feature type="zinc finger region" description="C4-type" evidence="1">
    <location>
        <begin position="28"/>
        <end position="50"/>
    </location>
</feature>
<feature type="binding site" evidence="1">
    <location>
        <position position="28"/>
    </location>
    <ligand>
        <name>Zn(2+)</name>
        <dbReference type="ChEBI" id="CHEBI:29105"/>
    </ligand>
</feature>
<feature type="binding site" evidence="1">
    <location>
        <position position="31"/>
    </location>
    <ligand>
        <name>Zn(2+)</name>
        <dbReference type="ChEBI" id="CHEBI:29105"/>
    </ligand>
</feature>
<feature type="binding site" evidence="1">
    <location>
        <position position="47"/>
    </location>
    <ligand>
        <name>Zn(2+)</name>
        <dbReference type="ChEBI" id="CHEBI:29105"/>
    </ligand>
</feature>
<feature type="binding site" evidence="1">
    <location>
        <position position="50"/>
    </location>
    <ligand>
        <name>Zn(2+)</name>
        <dbReference type="ChEBI" id="CHEBI:29105"/>
    </ligand>
</feature>
<comment type="function">
    <text evidence="1">Component of the acetyl coenzyme A carboxylase (ACC) complex. Biotin carboxylase (BC) catalyzes the carboxylation of biotin on its carrier protein (BCCP) and then the CO(2) group is transferred by the transcarboxylase to acetyl-CoA to form malonyl-CoA.</text>
</comment>
<comment type="catalytic activity">
    <reaction evidence="1">
        <text>N(6)-carboxybiotinyl-L-lysyl-[protein] + acetyl-CoA = N(6)-biotinyl-L-lysyl-[protein] + malonyl-CoA</text>
        <dbReference type="Rhea" id="RHEA:54728"/>
        <dbReference type="Rhea" id="RHEA-COMP:10505"/>
        <dbReference type="Rhea" id="RHEA-COMP:10506"/>
        <dbReference type="ChEBI" id="CHEBI:57288"/>
        <dbReference type="ChEBI" id="CHEBI:57384"/>
        <dbReference type="ChEBI" id="CHEBI:83144"/>
        <dbReference type="ChEBI" id="CHEBI:83145"/>
        <dbReference type="EC" id="2.1.3.15"/>
    </reaction>
</comment>
<comment type="cofactor">
    <cofactor evidence="1">
        <name>Zn(2+)</name>
        <dbReference type="ChEBI" id="CHEBI:29105"/>
    </cofactor>
    <text evidence="1">Binds 1 zinc ion per subunit.</text>
</comment>
<comment type="pathway">
    <text evidence="1">Lipid metabolism; malonyl-CoA biosynthesis; malonyl-CoA from acetyl-CoA: step 1/1.</text>
</comment>
<comment type="subunit">
    <text evidence="1">Acetyl-CoA carboxylase is a heterohexamer composed of biotin carboxyl carrier protein (AccB), biotin carboxylase (AccC) and two subunits each of ACCase subunit alpha (AccA) and ACCase subunit beta (AccD).</text>
</comment>
<comment type="subcellular location">
    <subcellularLocation>
        <location evidence="1">Cytoplasm</location>
    </subcellularLocation>
</comment>
<comment type="similarity">
    <text evidence="1">Belongs to the AccD/PCCB family.</text>
</comment>
<evidence type="ECO:0000255" key="1">
    <source>
        <dbReference type="HAMAP-Rule" id="MF_01395"/>
    </source>
</evidence>
<evidence type="ECO:0000255" key="2">
    <source>
        <dbReference type="PROSITE-ProRule" id="PRU01136"/>
    </source>
</evidence>
<protein>
    <recommendedName>
        <fullName evidence="1">Acetyl-coenzyme A carboxylase carboxyl transferase subunit beta</fullName>
        <shortName evidence="1">ACCase subunit beta</shortName>
        <shortName evidence="1">Acetyl-CoA carboxylase carboxyltransferase subunit beta</shortName>
        <ecNumber evidence="1">2.1.3.15</ecNumber>
    </recommendedName>
</protein>
<name>ACCD_GLUOX</name>
<proteinExistence type="inferred from homology"/>
<accession>Q5FRN1</accession>
<dbReference type="EC" id="2.1.3.15" evidence="1"/>
<dbReference type="EMBL" id="CP000009">
    <property type="protein sequence ID" value="AAW60965.1"/>
    <property type="molecule type" value="Genomic_DNA"/>
</dbReference>
<dbReference type="RefSeq" id="WP_011252757.1">
    <property type="nucleotide sequence ID" value="NZ_LT900338.1"/>
</dbReference>
<dbReference type="SMR" id="Q5FRN1"/>
<dbReference type="STRING" id="290633.GOX1204"/>
<dbReference type="GeneID" id="56905519"/>
<dbReference type="KEGG" id="gox:GOX1204"/>
<dbReference type="eggNOG" id="COG0777">
    <property type="taxonomic scope" value="Bacteria"/>
</dbReference>
<dbReference type="HOGENOM" id="CLU_015486_1_1_5"/>
<dbReference type="UniPathway" id="UPA00655">
    <property type="reaction ID" value="UER00711"/>
</dbReference>
<dbReference type="Proteomes" id="UP000006375">
    <property type="component" value="Chromosome"/>
</dbReference>
<dbReference type="GO" id="GO:0009329">
    <property type="term" value="C:acetate CoA-transferase complex"/>
    <property type="evidence" value="ECO:0007669"/>
    <property type="project" value="TreeGrafter"/>
</dbReference>
<dbReference type="GO" id="GO:0003989">
    <property type="term" value="F:acetyl-CoA carboxylase activity"/>
    <property type="evidence" value="ECO:0007669"/>
    <property type="project" value="InterPro"/>
</dbReference>
<dbReference type="GO" id="GO:0005524">
    <property type="term" value="F:ATP binding"/>
    <property type="evidence" value="ECO:0007669"/>
    <property type="project" value="UniProtKB-KW"/>
</dbReference>
<dbReference type="GO" id="GO:0016743">
    <property type="term" value="F:carboxyl- or carbamoyltransferase activity"/>
    <property type="evidence" value="ECO:0007669"/>
    <property type="project" value="UniProtKB-UniRule"/>
</dbReference>
<dbReference type="GO" id="GO:0008270">
    <property type="term" value="F:zinc ion binding"/>
    <property type="evidence" value="ECO:0007669"/>
    <property type="project" value="UniProtKB-UniRule"/>
</dbReference>
<dbReference type="GO" id="GO:0006633">
    <property type="term" value="P:fatty acid biosynthetic process"/>
    <property type="evidence" value="ECO:0007669"/>
    <property type="project" value="UniProtKB-KW"/>
</dbReference>
<dbReference type="GO" id="GO:2001295">
    <property type="term" value="P:malonyl-CoA biosynthetic process"/>
    <property type="evidence" value="ECO:0007669"/>
    <property type="project" value="UniProtKB-UniRule"/>
</dbReference>
<dbReference type="Gene3D" id="3.90.226.10">
    <property type="entry name" value="2-enoyl-CoA Hydratase, Chain A, domain 1"/>
    <property type="match status" value="1"/>
</dbReference>
<dbReference type="HAMAP" id="MF_01395">
    <property type="entry name" value="AcetylCoA_CT_beta"/>
    <property type="match status" value="1"/>
</dbReference>
<dbReference type="InterPro" id="IPR034733">
    <property type="entry name" value="AcCoA_carboxyl_beta"/>
</dbReference>
<dbReference type="InterPro" id="IPR000438">
    <property type="entry name" value="Acetyl_CoA_COase_Trfase_b_su"/>
</dbReference>
<dbReference type="InterPro" id="IPR029045">
    <property type="entry name" value="ClpP/crotonase-like_dom_sf"/>
</dbReference>
<dbReference type="InterPro" id="IPR011762">
    <property type="entry name" value="COA_CT_N"/>
</dbReference>
<dbReference type="InterPro" id="IPR041010">
    <property type="entry name" value="Znf-ACC"/>
</dbReference>
<dbReference type="NCBIfam" id="TIGR00515">
    <property type="entry name" value="accD"/>
    <property type="match status" value="1"/>
</dbReference>
<dbReference type="PANTHER" id="PTHR42995">
    <property type="entry name" value="ACETYL-COENZYME A CARBOXYLASE CARBOXYL TRANSFERASE SUBUNIT BETA, CHLOROPLASTIC"/>
    <property type="match status" value="1"/>
</dbReference>
<dbReference type="PANTHER" id="PTHR42995:SF5">
    <property type="entry name" value="ACETYL-COENZYME A CARBOXYLASE CARBOXYL TRANSFERASE SUBUNIT BETA, CHLOROPLASTIC"/>
    <property type="match status" value="1"/>
</dbReference>
<dbReference type="Pfam" id="PF01039">
    <property type="entry name" value="Carboxyl_trans"/>
    <property type="match status" value="1"/>
</dbReference>
<dbReference type="Pfam" id="PF17848">
    <property type="entry name" value="Zn_ribbon_ACC"/>
    <property type="match status" value="1"/>
</dbReference>
<dbReference type="PRINTS" id="PR01070">
    <property type="entry name" value="ACCCTRFRASEB"/>
</dbReference>
<dbReference type="SUPFAM" id="SSF52096">
    <property type="entry name" value="ClpP/crotonase"/>
    <property type="match status" value="1"/>
</dbReference>
<dbReference type="PROSITE" id="PS50980">
    <property type="entry name" value="COA_CT_NTER"/>
    <property type="match status" value="1"/>
</dbReference>
<gene>
    <name evidence="1" type="primary">accD</name>
    <name type="ordered locus">GOX1204</name>
</gene>
<sequence>MSWMTDYVRPKLRGLLQRDVPDNLWTNCESCGQMMLTKELERSEKVCPHCGHHMRATAKERLGWTFDGGEYTTIELPKMPVDPLGFKDSKRYTDRLKDARHKSHLDEALVVAHGMIKGQKAVVAVMAPEFLLGTMGAALGEAFVAACRLAVLQKAPLVVYTASGGARMQEGVVSLMQMPRTTIGVQMLQEAGLPYVVVFTNPTTGGVSASFAMLGDVHIAEPNALIAFAGPRVIQDTVREKLPEGFQRSEYLREHGMVDIVAKRSELPELLGRILGIMMRQKTVSDAAA</sequence>
<reference key="1">
    <citation type="journal article" date="2005" name="Nat. Biotechnol.">
        <title>Complete genome sequence of the acetic acid bacterium Gluconobacter oxydans.</title>
        <authorList>
            <person name="Prust C."/>
            <person name="Hoffmeister M."/>
            <person name="Liesegang H."/>
            <person name="Wiezer A."/>
            <person name="Fricke W.F."/>
            <person name="Ehrenreich A."/>
            <person name="Gottschalk G."/>
            <person name="Deppenmeier U."/>
        </authorList>
    </citation>
    <scope>NUCLEOTIDE SEQUENCE [LARGE SCALE GENOMIC DNA]</scope>
    <source>
        <strain>621H</strain>
    </source>
</reference>
<organism>
    <name type="scientific">Gluconobacter oxydans (strain 621H)</name>
    <name type="common">Gluconobacter suboxydans</name>
    <dbReference type="NCBI Taxonomy" id="290633"/>
    <lineage>
        <taxon>Bacteria</taxon>
        <taxon>Pseudomonadati</taxon>
        <taxon>Pseudomonadota</taxon>
        <taxon>Alphaproteobacteria</taxon>
        <taxon>Acetobacterales</taxon>
        <taxon>Acetobacteraceae</taxon>
        <taxon>Gluconobacter</taxon>
    </lineage>
</organism>